<gene>
    <name type="primary">CAPZB</name>
</gene>
<reference key="1">
    <citation type="journal article" date="1989" name="J. Biol. Chem.">
        <title>cDNAs encoding the beta subunit of cap Z, the actin-capping protein of the Z line of muscle.</title>
        <authorList>
            <person name="Caldwell J.E."/>
            <person name="Waddle J.A."/>
            <person name="Cooper J.A."/>
            <person name="Hollands J.A."/>
            <person name="Casella S.J."/>
            <person name="Casella J.F."/>
        </authorList>
    </citation>
    <scope>NUCLEOTIDE SEQUENCE [MRNA] (ISOFORM 1)</scope>
</reference>
<reference key="2">
    <citation type="journal article" date="1994" name="J. Cell Biol.">
        <title>Differential localization and sequence analysis of capping protein beta-subunit isoforms of vertebrates.</title>
        <authorList>
            <person name="Schafer D.A."/>
            <person name="Korshunova Y.O."/>
            <person name="Schroer T.A."/>
            <person name="Cooper J.A."/>
        </authorList>
    </citation>
    <scope>NUCLEOTIDE SEQUENCE [MRNA] (ISOFORM 2)</scope>
    <scope>SUBUNIT</scope>
    <scope>SUBCELLULAR LOCATION</scope>
    <scope>TISSUE SPECIFICITY</scope>
</reference>
<reference key="3">
    <citation type="journal article" date="1990" name="J. Biol. Chem.">
        <title>Beta-actinin is equivalent to Cap Z protein.</title>
        <authorList>
            <person name="Maruyama K."/>
            <person name="Kurokawa H."/>
            <person name="Oosawa M."/>
            <person name="Shimaoka S."/>
            <person name="Yamamoto H."/>
            <person name="Ito M."/>
            <person name="Maruyama K."/>
        </authorList>
    </citation>
    <scope>PROTEIN SEQUENCE OF 160-168 AND 182-198</scope>
    <source>
        <tissue>Muscle</tissue>
    </source>
</reference>
<proteinExistence type="evidence at protein level"/>
<accession>P14315</accession>
<evidence type="ECO:0000250" key="1"/>
<evidence type="ECO:0000250" key="2">
    <source>
        <dbReference type="UniProtKB" id="A9XFX6"/>
    </source>
</evidence>
<evidence type="ECO:0000250" key="3">
    <source>
        <dbReference type="UniProtKB" id="P47756"/>
    </source>
</evidence>
<evidence type="ECO:0000250" key="4">
    <source>
        <dbReference type="UniProtKB" id="Q5XI32"/>
    </source>
</evidence>
<evidence type="ECO:0000269" key="5">
    <source>
    </source>
</evidence>
<evidence type="ECO:0000303" key="6">
    <source>
    </source>
</evidence>
<evidence type="ECO:0000305" key="7"/>
<evidence type="ECO:0007829" key="8">
    <source>
        <dbReference type="PDB" id="1IZN"/>
    </source>
</evidence>
<evidence type="ECO:0007829" key="9">
    <source>
        <dbReference type="PDB" id="3AA0"/>
    </source>
</evidence>
<evidence type="ECO:0007829" key="10">
    <source>
        <dbReference type="PDB" id="7DS6"/>
    </source>
</evidence>
<dbReference type="EMBL" id="J04959">
    <property type="protein sequence ID" value="AAA49144.1"/>
    <property type="molecule type" value="mRNA"/>
</dbReference>
<dbReference type="EMBL" id="U07826">
    <property type="protein sequence ID" value="AAA52222.1"/>
    <property type="molecule type" value="mRNA"/>
</dbReference>
<dbReference type="PIR" id="A34335">
    <property type="entry name" value="A34335"/>
</dbReference>
<dbReference type="PIR" id="A54819">
    <property type="entry name" value="A54819"/>
</dbReference>
<dbReference type="RefSeq" id="NP_001167000.1">
    <molecule id="P14315-2"/>
    <property type="nucleotide sequence ID" value="NM_001173529.2"/>
</dbReference>
<dbReference type="RefSeq" id="NP_990768.1">
    <molecule id="P14315-1"/>
    <property type="nucleotide sequence ID" value="NM_205437.3"/>
</dbReference>
<dbReference type="RefSeq" id="XP_015152321.1">
    <molecule id="P14315-1"/>
    <property type="nucleotide sequence ID" value="XM_015296835.4"/>
</dbReference>
<dbReference type="RefSeq" id="XP_046787122.1">
    <molecule id="P14315-1"/>
    <property type="nucleotide sequence ID" value="XM_046931166.1"/>
</dbReference>
<dbReference type="PDB" id="1IZN">
    <property type="method" value="X-ray"/>
    <property type="resolution" value="2.10 A"/>
    <property type="chains" value="B/D=1-277"/>
</dbReference>
<dbReference type="PDB" id="2KXP">
    <property type="method" value="NMR"/>
    <property type="chains" value="B=2-271"/>
</dbReference>
<dbReference type="PDB" id="2KZ7">
    <property type="method" value="NMR"/>
    <property type="chains" value="B=1-277"/>
</dbReference>
<dbReference type="PDB" id="3AA0">
    <property type="method" value="X-ray"/>
    <property type="resolution" value="1.70 A"/>
    <property type="chains" value="B=1-244"/>
</dbReference>
<dbReference type="PDB" id="3AA1">
    <property type="method" value="X-ray"/>
    <property type="resolution" value="1.90 A"/>
    <property type="chains" value="B=1-244"/>
</dbReference>
<dbReference type="PDB" id="3AA6">
    <property type="method" value="X-ray"/>
    <property type="resolution" value="1.90 A"/>
    <property type="chains" value="B=1-244"/>
</dbReference>
<dbReference type="PDB" id="3AA7">
    <property type="method" value="X-ray"/>
    <property type="resolution" value="1.90 A"/>
    <property type="chains" value="B=1-244"/>
</dbReference>
<dbReference type="PDB" id="3AAA">
    <property type="method" value="X-ray"/>
    <property type="resolution" value="2.20 A"/>
    <property type="chains" value="B=1-277"/>
</dbReference>
<dbReference type="PDB" id="3AAE">
    <property type="method" value="X-ray"/>
    <property type="resolution" value="3.30 A"/>
    <property type="chains" value="B/D/F/H/J=1-277"/>
</dbReference>
<dbReference type="PDB" id="3LK2">
    <property type="method" value="X-ray"/>
    <property type="resolution" value="2.20 A"/>
    <property type="chains" value="B=1-243"/>
</dbReference>
<dbReference type="PDB" id="3LK3">
    <property type="method" value="X-ray"/>
    <property type="resolution" value="2.68 A"/>
    <property type="chains" value="B=1-277"/>
</dbReference>
<dbReference type="PDB" id="3LK4">
    <property type="method" value="X-ray"/>
    <property type="resolution" value="1.99 A"/>
    <property type="chains" value="2/5/8/B/E/H/K/N/Q/T/W/Z=1-277"/>
</dbReference>
<dbReference type="PDB" id="7DS2">
    <property type="method" value="X-ray"/>
    <property type="resolution" value="1.95 A"/>
    <property type="chains" value="B=1-244"/>
</dbReference>
<dbReference type="PDB" id="7DS3">
    <property type="method" value="X-ray"/>
    <property type="resolution" value="2.09 A"/>
    <property type="chains" value="B=1-244"/>
</dbReference>
<dbReference type="PDB" id="7DS4">
    <property type="method" value="X-ray"/>
    <property type="resolution" value="1.85 A"/>
    <property type="chains" value="B=1-244"/>
</dbReference>
<dbReference type="PDB" id="7DS6">
    <property type="method" value="X-ray"/>
    <property type="resolution" value="1.69 A"/>
    <property type="chains" value="B=1-244"/>
</dbReference>
<dbReference type="PDB" id="7DS8">
    <property type="method" value="X-ray"/>
    <property type="resolution" value="1.95 A"/>
    <property type="chains" value="B=1-244"/>
</dbReference>
<dbReference type="PDB" id="7DSA">
    <property type="method" value="X-ray"/>
    <property type="resolution" value="2.80 A"/>
    <property type="chains" value="B=1-244"/>
</dbReference>
<dbReference type="PDB" id="7DSB">
    <property type="method" value="X-ray"/>
    <property type="resolution" value="2.44 A"/>
    <property type="chains" value="B=1-244"/>
</dbReference>
<dbReference type="PDBsum" id="1IZN"/>
<dbReference type="PDBsum" id="2KXP"/>
<dbReference type="PDBsum" id="2KZ7"/>
<dbReference type="PDBsum" id="3AA0"/>
<dbReference type="PDBsum" id="3AA1"/>
<dbReference type="PDBsum" id="3AA6"/>
<dbReference type="PDBsum" id="3AA7"/>
<dbReference type="PDBsum" id="3AAA"/>
<dbReference type="PDBsum" id="3AAE"/>
<dbReference type="PDBsum" id="3LK2"/>
<dbReference type="PDBsum" id="3LK3"/>
<dbReference type="PDBsum" id="3LK4"/>
<dbReference type="PDBsum" id="7DS2"/>
<dbReference type="PDBsum" id="7DS3"/>
<dbReference type="PDBsum" id="7DS4"/>
<dbReference type="PDBsum" id="7DS6"/>
<dbReference type="PDBsum" id="7DS8"/>
<dbReference type="PDBsum" id="7DSA"/>
<dbReference type="PDBsum" id="7DSB"/>
<dbReference type="SMR" id="P14315"/>
<dbReference type="BioGRID" id="676667">
    <property type="interactions" value="1"/>
</dbReference>
<dbReference type="DIP" id="DIP-35365N"/>
<dbReference type="FunCoup" id="P14315">
    <property type="interactions" value="2729"/>
</dbReference>
<dbReference type="IntAct" id="P14315">
    <property type="interactions" value="3"/>
</dbReference>
<dbReference type="MINT" id="P14315"/>
<dbReference type="STRING" id="9031.ENSGALP00000006415"/>
<dbReference type="PaxDb" id="9031-ENSGALP00000006415"/>
<dbReference type="Ensembl" id="ENSGALT00010049763.1">
    <molecule id="P14315-1"/>
    <property type="protein sequence ID" value="ENSGALP00010029404.1"/>
    <property type="gene ID" value="ENSGALG00010020608.1"/>
</dbReference>
<dbReference type="GeneID" id="396418"/>
<dbReference type="KEGG" id="gga:396418"/>
<dbReference type="CTD" id="832"/>
<dbReference type="VEuPathDB" id="HostDB:geneid_396418"/>
<dbReference type="eggNOG" id="KOG3174">
    <property type="taxonomic scope" value="Eukaryota"/>
</dbReference>
<dbReference type="GeneTree" id="ENSGT00390000017957"/>
<dbReference type="HOGENOM" id="CLU_045864_2_0_1"/>
<dbReference type="InParanoid" id="P14315"/>
<dbReference type="OMA" id="WSNKYYP"/>
<dbReference type="OrthoDB" id="9979678at2759"/>
<dbReference type="PhylomeDB" id="P14315"/>
<dbReference type="Reactome" id="R-GGA-3371497">
    <property type="pathway name" value="HSP90 chaperone cycle for steroid hormone receptors (SHR) in the presence of ligand"/>
</dbReference>
<dbReference type="Reactome" id="R-GGA-6807878">
    <property type="pathway name" value="COPI-mediated anterograde transport"/>
</dbReference>
<dbReference type="Reactome" id="R-GGA-6811436">
    <property type="pathway name" value="COPI-independent Golgi-to-ER retrograde traffic"/>
</dbReference>
<dbReference type="Reactome" id="R-GGA-9013405">
    <property type="pathway name" value="RHOD GTPase cycle"/>
</dbReference>
<dbReference type="Reactome" id="R-GGA-9035034">
    <property type="pathway name" value="RHOF GTPase cycle"/>
</dbReference>
<dbReference type="Reactome" id="R-GGA-983231">
    <property type="pathway name" value="Factors involved in megakaryocyte development and platelet production"/>
</dbReference>
<dbReference type="EvolutionaryTrace" id="P14315"/>
<dbReference type="PRO" id="PR:P14315"/>
<dbReference type="Proteomes" id="UP000000539">
    <property type="component" value="Chromosome 21"/>
</dbReference>
<dbReference type="Bgee" id="ENSGALG00000004034">
    <property type="expression patterns" value="Expressed in ovary and 13 other cell types or tissues"/>
</dbReference>
<dbReference type="GO" id="GO:0005903">
    <property type="term" value="C:brush border"/>
    <property type="evidence" value="ECO:0007669"/>
    <property type="project" value="Ensembl"/>
</dbReference>
<dbReference type="GO" id="GO:0030863">
    <property type="term" value="C:cortical cytoskeleton"/>
    <property type="evidence" value="ECO:0007669"/>
    <property type="project" value="Ensembl"/>
</dbReference>
<dbReference type="GO" id="GO:0005829">
    <property type="term" value="C:cytosol"/>
    <property type="evidence" value="ECO:0000304"/>
    <property type="project" value="Reactome"/>
</dbReference>
<dbReference type="GO" id="GO:0008290">
    <property type="term" value="C:F-actin capping protein complex"/>
    <property type="evidence" value="ECO:0000318"/>
    <property type="project" value="GO_Central"/>
</dbReference>
<dbReference type="GO" id="GO:0098686">
    <property type="term" value="C:hippocampal mossy fiber to CA3 synapse"/>
    <property type="evidence" value="ECO:0007669"/>
    <property type="project" value="Ensembl"/>
</dbReference>
<dbReference type="GO" id="GO:0030027">
    <property type="term" value="C:lamellipodium"/>
    <property type="evidence" value="ECO:0007669"/>
    <property type="project" value="Ensembl"/>
</dbReference>
<dbReference type="GO" id="GO:0016020">
    <property type="term" value="C:membrane"/>
    <property type="evidence" value="ECO:0007669"/>
    <property type="project" value="Ensembl"/>
</dbReference>
<dbReference type="GO" id="GO:0014069">
    <property type="term" value="C:postsynaptic density"/>
    <property type="evidence" value="ECO:0007669"/>
    <property type="project" value="Ensembl"/>
</dbReference>
<dbReference type="GO" id="GO:0098685">
    <property type="term" value="C:Schaffer collateral - CA1 synapse"/>
    <property type="evidence" value="ECO:0007669"/>
    <property type="project" value="Ensembl"/>
</dbReference>
<dbReference type="GO" id="GO:0120212">
    <property type="term" value="C:sperm head-tail coupling apparatus"/>
    <property type="evidence" value="ECO:0007669"/>
    <property type="project" value="Ensembl"/>
</dbReference>
<dbReference type="GO" id="GO:0071203">
    <property type="term" value="C:WASH complex"/>
    <property type="evidence" value="ECO:0007669"/>
    <property type="project" value="Ensembl"/>
</dbReference>
<dbReference type="GO" id="GO:0030018">
    <property type="term" value="C:Z disc"/>
    <property type="evidence" value="ECO:0007669"/>
    <property type="project" value="UniProtKB-SubCell"/>
</dbReference>
<dbReference type="GO" id="GO:0051015">
    <property type="term" value="F:actin filament binding"/>
    <property type="evidence" value="ECO:0000318"/>
    <property type="project" value="GO_Central"/>
</dbReference>
<dbReference type="GO" id="GO:0008154">
    <property type="term" value="P:actin polymerization or depolymerization"/>
    <property type="evidence" value="ECO:0007669"/>
    <property type="project" value="Ensembl"/>
</dbReference>
<dbReference type="GO" id="GO:0051016">
    <property type="term" value="P:barbed-end actin filament capping"/>
    <property type="evidence" value="ECO:0000318"/>
    <property type="project" value="GO_Central"/>
</dbReference>
<dbReference type="GO" id="GO:0000902">
    <property type="term" value="P:cell morphogenesis"/>
    <property type="evidence" value="ECO:0000318"/>
    <property type="project" value="GO_Central"/>
</dbReference>
<dbReference type="GO" id="GO:0007010">
    <property type="term" value="P:cytoskeleton organization"/>
    <property type="evidence" value="ECO:0000250"/>
    <property type="project" value="UniProtKB"/>
</dbReference>
<dbReference type="GO" id="GO:0030032">
    <property type="term" value="P:lamellipodium assembly"/>
    <property type="evidence" value="ECO:0007669"/>
    <property type="project" value="Ensembl"/>
</dbReference>
<dbReference type="GO" id="GO:0051490">
    <property type="term" value="P:negative regulation of filopodium assembly"/>
    <property type="evidence" value="ECO:0000318"/>
    <property type="project" value="GO_Central"/>
</dbReference>
<dbReference type="GO" id="GO:0022604">
    <property type="term" value="P:regulation of cell morphogenesis"/>
    <property type="evidence" value="ECO:0000250"/>
    <property type="project" value="UniProtKB"/>
</dbReference>
<dbReference type="GO" id="GO:0010591">
    <property type="term" value="P:regulation of lamellipodium assembly"/>
    <property type="evidence" value="ECO:0000318"/>
    <property type="project" value="GO_Central"/>
</dbReference>
<dbReference type="FunFam" id="1.20.58.570:FF:000001">
    <property type="entry name" value="F-actin-capping protein subunit beta"/>
    <property type="match status" value="1"/>
</dbReference>
<dbReference type="FunFam" id="3.90.1150.210:FF:000001">
    <property type="entry name" value="F-actin-capping protein subunit beta"/>
    <property type="match status" value="1"/>
</dbReference>
<dbReference type="Gene3D" id="1.20.58.570">
    <property type="match status" value="1"/>
</dbReference>
<dbReference type="Gene3D" id="6.10.250.30">
    <property type="entry name" value="Capz alpha-1 subunit"/>
    <property type="match status" value="1"/>
</dbReference>
<dbReference type="Gene3D" id="3.90.1150.210">
    <property type="entry name" value="F-actin capping protein, beta subunit"/>
    <property type="match status" value="1"/>
</dbReference>
<dbReference type="InterPro" id="IPR037282">
    <property type="entry name" value="CapZ_alpha/beta"/>
</dbReference>
<dbReference type="InterPro" id="IPR042276">
    <property type="entry name" value="CapZ_alpha/beta_2"/>
</dbReference>
<dbReference type="InterPro" id="IPR001698">
    <property type="entry name" value="CAPZB"/>
</dbReference>
<dbReference type="InterPro" id="IPR043175">
    <property type="entry name" value="CAPZB_N"/>
</dbReference>
<dbReference type="InterPro" id="IPR019771">
    <property type="entry name" value="F-actin_capping_bsu_CS"/>
</dbReference>
<dbReference type="PANTHER" id="PTHR10619">
    <property type="entry name" value="F-ACTIN-CAPPING PROTEIN SUBUNIT BETA"/>
    <property type="match status" value="1"/>
</dbReference>
<dbReference type="PANTHER" id="PTHR10619:SF0">
    <property type="entry name" value="F-ACTIN-CAPPING PROTEIN SUBUNIT BETA ISOFORMS 1 AND 2"/>
    <property type="match status" value="1"/>
</dbReference>
<dbReference type="Pfam" id="PF01115">
    <property type="entry name" value="F_actin_cap_B"/>
    <property type="match status" value="1"/>
</dbReference>
<dbReference type="PRINTS" id="PR00192">
    <property type="entry name" value="FACTINCAPB"/>
</dbReference>
<dbReference type="SUPFAM" id="SSF90096">
    <property type="entry name" value="Subunits of heterodimeric actin filament capping protein Capz"/>
    <property type="match status" value="1"/>
</dbReference>
<dbReference type="PROSITE" id="PS00231">
    <property type="entry name" value="F_ACTIN_CAPPING_BETA"/>
    <property type="match status" value="1"/>
</dbReference>
<sequence length="277" mass="31364">MSDQQLDCALDLMRRLPPQQIEKNLSDLIDLVPSLCEDLLSSVDQPLKIARDKVVGKDYLLCDYNRDGDSYRSPWSNKYDPPLEDGAMPSARLRKLEVEANNAFDQYRDLYFEGGVSSVYLWDLDHGFAGVILIKKAGDGSKKIKGCWDSIHVVEVQEKSSGRTAHYKLTSTVMLWLQTNKTGSGTMNLGGSLTRQMEKDETVSDSSPHIANIGRLVEDMENKIRSTLNEIYFGKTKDIVNGLRSIDAIPDNQKYKQLQRELSQVLTQRQIYIQPDN</sequence>
<organism>
    <name type="scientific">Gallus gallus</name>
    <name type="common">Chicken</name>
    <dbReference type="NCBI Taxonomy" id="9031"/>
    <lineage>
        <taxon>Eukaryota</taxon>
        <taxon>Metazoa</taxon>
        <taxon>Chordata</taxon>
        <taxon>Craniata</taxon>
        <taxon>Vertebrata</taxon>
        <taxon>Euteleostomi</taxon>
        <taxon>Archelosauria</taxon>
        <taxon>Archosauria</taxon>
        <taxon>Dinosauria</taxon>
        <taxon>Saurischia</taxon>
        <taxon>Theropoda</taxon>
        <taxon>Coelurosauria</taxon>
        <taxon>Aves</taxon>
        <taxon>Neognathae</taxon>
        <taxon>Galloanserae</taxon>
        <taxon>Galliformes</taxon>
        <taxon>Phasianidae</taxon>
        <taxon>Phasianinae</taxon>
        <taxon>Gallus</taxon>
    </lineage>
</organism>
<feature type="initiator methionine" description="Removed" evidence="1">
    <location>
        <position position="1"/>
    </location>
</feature>
<feature type="chain" id="PRO_0000204636" description="F-actin-capping protein subunit beta isoforms 1 and 2">
    <location>
        <begin position="2"/>
        <end position="277"/>
    </location>
</feature>
<feature type="modified residue" description="N-acetylserine" evidence="1">
    <location>
        <position position="2"/>
    </location>
</feature>
<feature type="splice variant" id="VSP_000769" description="In isoform 2." evidence="6">
    <original>IDAIPDNQKYKQLQRELSQVLTQRQIYIQPDN</original>
    <variation>VQTFADKSKQEALKNDLVEALKRKQQS</variation>
    <location>
        <begin position="246"/>
        <end position="277"/>
    </location>
</feature>
<feature type="helix" evidence="10">
    <location>
        <begin position="5"/>
        <end position="13"/>
    </location>
</feature>
<feature type="helix" evidence="10">
    <location>
        <begin position="18"/>
        <end position="20"/>
    </location>
</feature>
<feature type="helix" evidence="10">
    <location>
        <begin position="21"/>
        <end position="31"/>
    </location>
</feature>
<feature type="helix" evidence="10">
    <location>
        <begin position="33"/>
        <end position="35"/>
    </location>
</feature>
<feature type="helix" evidence="10">
    <location>
        <begin position="36"/>
        <end position="42"/>
    </location>
</feature>
<feature type="strand" evidence="10">
    <location>
        <begin position="48"/>
        <end position="52"/>
    </location>
</feature>
<feature type="turn" evidence="10">
    <location>
        <begin position="53"/>
        <end position="56"/>
    </location>
</feature>
<feature type="strand" evidence="10">
    <location>
        <begin position="57"/>
        <end position="61"/>
    </location>
</feature>
<feature type="helix" evidence="10">
    <location>
        <begin position="63"/>
        <end position="65"/>
    </location>
</feature>
<feature type="strand" evidence="10">
    <location>
        <begin position="70"/>
        <end position="72"/>
    </location>
</feature>
<feature type="turn" evidence="10">
    <location>
        <begin position="74"/>
        <end position="76"/>
    </location>
</feature>
<feature type="strand" evidence="10">
    <location>
        <begin position="79"/>
        <end position="81"/>
    </location>
</feature>
<feature type="helix" evidence="10">
    <location>
        <begin position="91"/>
        <end position="112"/>
    </location>
</feature>
<feature type="strand" evidence="10">
    <location>
        <begin position="113"/>
        <end position="124"/>
    </location>
</feature>
<feature type="strand" evidence="10">
    <location>
        <begin position="127"/>
        <end position="137"/>
    </location>
</feature>
<feature type="helix" evidence="10">
    <location>
        <begin position="141"/>
        <end position="143"/>
    </location>
</feature>
<feature type="strand" evidence="10">
    <location>
        <begin position="145"/>
        <end position="158"/>
    </location>
</feature>
<feature type="strand" evidence="10">
    <location>
        <begin position="162"/>
        <end position="178"/>
    </location>
</feature>
<feature type="turn" evidence="9">
    <location>
        <begin position="182"/>
        <end position="184"/>
    </location>
</feature>
<feature type="strand" evidence="10">
    <location>
        <begin position="186"/>
        <end position="202"/>
    </location>
</feature>
<feature type="strand" evidence="10">
    <location>
        <begin position="205"/>
        <end position="207"/>
    </location>
</feature>
<feature type="helix" evidence="10">
    <location>
        <begin position="209"/>
        <end position="233"/>
    </location>
</feature>
<feature type="helix" evidence="10">
    <location>
        <begin position="235"/>
        <end position="241"/>
    </location>
</feature>
<feature type="helix" evidence="8">
    <location>
        <begin position="253"/>
        <end position="267"/>
    </location>
</feature>
<protein>
    <recommendedName>
        <fullName>F-actin-capping protein subunit beta isoforms 1 and 2</fullName>
    </recommendedName>
    <alternativeName>
        <fullName>Beta-actinin subunit II</fullName>
    </alternativeName>
    <alternativeName>
        <fullName>CapZ 36/32</fullName>
    </alternativeName>
    <alternativeName>
        <fullName>CapZ B1 and B2</fullName>
    </alternativeName>
</protein>
<keyword id="KW-0002">3D-structure</keyword>
<keyword id="KW-0007">Acetylation</keyword>
<keyword id="KW-0117">Actin capping</keyword>
<keyword id="KW-0009">Actin-binding</keyword>
<keyword id="KW-0025">Alternative splicing</keyword>
<keyword id="KW-0963">Cytoplasm</keyword>
<keyword id="KW-0206">Cytoskeleton</keyword>
<keyword id="KW-0903">Direct protein sequencing</keyword>
<keyword id="KW-1185">Reference proteome</keyword>
<name>CAPZB_CHICK</name>
<comment type="function">
    <text evidence="3">F-actin-capping proteins bind in a Ca(2+)-independent manner to the fast growing ends of actin filaments (barbed end) thereby blocking the exchange of subunits at these ends. Unlike other capping proteins (such as gelsolin and severin), these proteins do not sever actin filaments. May play a role in the regulation of cell morphology and cytoskeletal organization.</text>
</comment>
<comment type="function">
    <molecule>Isoform 2</molecule>
    <text evidence="2">Forms, with CAPZB, the barbed end of the fast growing ends of actin filaments in the dynactin complex and stabilizes dynactin structure. The dynactin multiprotein complex activates the molecular motor dynein for ultra-processive transport along microtubules.</text>
</comment>
<comment type="subunit">
    <text evidence="3">Component of the F-actin capping complex, composed of a heterodimer of an alpha and a beta subunit. Component of the WASH complex (By similarity).</text>
</comment>
<comment type="subunit">
    <molecule>Isoform 2</molecule>
    <text evidence="5">Component of the F-actin capping complex, composed of a heterodimer of an alpha and a beta subunit. Subunit of dynactin, a multiprotein complex part of a tripartite complex with dynein and a adapter, such as BICDL1, BICD2 or HOOK3. The dynactin complex is built around ACTR1A/ACTB filament and consists of an actin-related filament composed of a shoulder domain, a pointed end and a barbed end. Its length is defined by its flexible shoulder domain.</text>
</comment>
<comment type="interaction">
    <interactant intactId="EBI-15845670">
        <id>P14315-1</id>
    </interactant>
    <interactant intactId="EBI-1036025">
        <id>P13127</id>
        <label>CAPZA1</label>
    </interactant>
    <organismsDiffer>false</organismsDiffer>
    <experiments>14</experiments>
</comment>
<comment type="subcellular location">
    <molecule>Isoform 1</molecule>
    <subcellularLocation>
        <location evidence="5">Cytoplasm</location>
        <location evidence="5">Myofibril</location>
        <location evidence="5">Sarcomere</location>
        <location evidence="5">Z line</location>
    </subcellularLocation>
    <text evidence="5">In cardiac muscle, isoform 1 is located at Z-disks of sarcomeres.</text>
</comment>
<comment type="subcellular location">
    <molecule>Isoform 2</molecule>
    <subcellularLocation>
        <location evidence="5">Cytoplasm</location>
        <location evidence="5">Myofibril</location>
        <location evidence="5">Sarcomere</location>
        <location evidence="5">I band</location>
    </subcellularLocation>
    <subcellularLocation>
        <location evidence="4">Cytoplasm</location>
        <location evidence="4">Cytoskeleton</location>
    </subcellularLocation>
    <text evidence="5">In cardiac muscle, isoform 2 is located at sarcomere intercalated disks.</text>
</comment>
<comment type="alternative products">
    <event type="alternative splicing"/>
    <isoform>
        <id>P14315-1</id>
        <name>1</name>
        <name>Beta-1</name>
        <sequence type="displayed"/>
    </isoform>
    <isoform>
        <id>P14315-2</id>
        <name>2</name>
        <name>Beta-2</name>
        <sequence type="described" ref="VSP_000769"/>
    </isoform>
</comment>
<comment type="tissue specificity">
    <text evidence="5">Isoform 1 is detected in pectoral muscle, cardiac muscle and gizzard. Isoform 2 is detected in brain and liver (at protein level). Isoform 2 is the predominant isoform of nonmuscle tissues and isoform 1 is the predominant isoform of muscle tissues.</text>
</comment>
<comment type="similarity">
    <text evidence="7">Belongs to the F-actin-capping protein beta subunit family.</text>
</comment>